<protein>
    <recommendedName>
        <fullName evidence="1">Argininosuccinate lyase</fullName>
        <shortName evidence="1">ASAL</shortName>
        <ecNumber evidence="1">4.3.2.1</ecNumber>
    </recommendedName>
    <alternativeName>
        <fullName evidence="1">Arginosuccinase</fullName>
    </alternativeName>
</protein>
<organism>
    <name type="scientific">Acinetobacter baumannii (strain ATCC 17978 / DSM 105126 / CIP 53.77 / LMG 1025 / NCDC KC755 / 5377)</name>
    <dbReference type="NCBI Taxonomy" id="400667"/>
    <lineage>
        <taxon>Bacteria</taxon>
        <taxon>Pseudomonadati</taxon>
        <taxon>Pseudomonadota</taxon>
        <taxon>Gammaproteobacteria</taxon>
        <taxon>Moraxellales</taxon>
        <taxon>Moraxellaceae</taxon>
        <taxon>Acinetobacter</taxon>
        <taxon>Acinetobacter calcoaceticus/baumannii complex</taxon>
    </lineage>
</organism>
<sequence length="477" mass="52735">MTTSSNPPNSAAPNQTSGMWGGRFSEATDAFVAEFTASVQFDQRFYKQDIAGSIAHATMLAKVGVLTEAERDDIIEGLSTIRAEIEAGTFEWRIDLEDVHMNIESRLTQRIGITGKKLHTGRSRNDQVATDIRLYLRDEIDDILGLLERLQKGLLGLAAKNVNTIMPGFTHLQTAQPVTFGHHLLAWFEMLVRDTERLQDCRKRVNRMPLGSAALAGTTYPIDRAYTAELLGFEAVSENSLDAVSDRDFAIEFNAAASLIMMHLSRMSEELILWTSAQFKFVNIPDRFCTGSSIMPQKKNPDVPELIRGKSGRVFGDLISLLTLMKGQPLAYNKDNQEDKEPLFDAIDTVRGSLMAFADMIPALVPNVEIMREAALRGFSTATDLADYLVKKGVAFRDAHEIVGKAVALGVAEEKDLSELTLEQLQQFSDLITADVFDKALTLEASVNARDHIGGTSPKQVEAAIARAHKRLEQLYA</sequence>
<name>ARLY_ACIBT</name>
<dbReference type="EC" id="4.3.2.1" evidence="1"/>
<dbReference type="EMBL" id="CP000521">
    <property type="protein sequence ID" value="ABO10734.1"/>
    <property type="status" value="ALT_SEQ"/>
    <property type="molecule type" value="Genomic_DNA"/>
</dbReference>
<dbReference type="EMBL" id="CP000521">
    <property type="protein sequence ID" value="ABO10733.1"/>
    <property type="status" value="ALT_FRAME"/>
    <property type="molecule type" value="Genomic_DNA"/>
</dbReference>
<dbReference type="RefSeq" id="WP_000213740.1">
    <property type="nucleotide sequence ID" value="NZ_CP053098.1"/>
</dbReference>
<dbReference type="SMR" id="A3M1E0"/>
<dbReference type="GeneID" id="92892257"/>
<dbReference type="KEGG" id="acb:A1S_0258"/>
<dbReference type="KEGG" id="acb:A1S_0259"/>
<dbReference type="HOGENOM" id="CLU_3338910_0_0_6"/>
<dbReference type="UniPathway" id="UPA00068">
    <property type="reaction ID" value="UER00114"/>
</dbReference>
<dbReference type="GO" id="GO:0005829">
    <property type="term" value="C:cytosol"/>
    <property type="evidence" value="ECO:0007669"/>
    <property type="project" value="TreeGrafter"/>
</dbReference>
<dbReference type="GO" id="GO:0004056">
    <property type="term" value="F:argininosuccinate lyase activity"/>
    <property type="evidence" value="ECO:0007669"/>
    <property type="project" value="UniProtKB-UniRule"/>
</dbReference>
<dbReference type="GO" id="GO:0042450">
    <property type="term" value="P:arginine biosynthetic process via ornithine"/>
    <property type="evidence" value="ECO:0007669"/>
    <property type="project" value="InterPro"/>
</dbReference>
<dbReference type="GO" id="GO:0006526">
    <property type="term" value="P:L-arginine biosynthetic process"/>
    <property type="evidence" value="ECO:0007669"/>
    <property type="project" value="UniProtKB-UniRule"/>
</dbReference>
<dbReference type="CDD" id="cd01359">
    <property type="entry name" value="Argininosuccinate_lyase"/>
    <property type="match status" value="1"/>
</dbReference>
<dbReference type="FunFam" id="1.10.275.10:FF:000002">
    <property type="entry name" value="Argininosuccinate lyase"/>
    <property type="match status" value="1"/>
</dbReference>
<dbReference type="FunFam" id="1.10.40.30:FF:000001">
    <property type="entry name" value="Argininosuccinate lyase"/>
    <property type="match status" value="1"/>
</dbReference>
<dbReference type="FunFam" id="1.20.200.10:FF:000015">
    <property type="entry name" value="argininosuccinate lyase isoform X2"/>
    <property type="match status" value="1"/>
</dbReference>
<dbReference type="Gene3D" id="1.10.40.30">
    <property type="entry name" value="Fumarase/aspartase (C-terminal domain)"/>
    <property type="match status" value="1"/>
</dbReference>
<dbReference type="Gene3D" id="1.20.200.10">
    <property type="entry name" value="Fumarase/aspartase (Central domain)"/>
    <property type="match status" value="1"/>
</dbReference>
<dbReference type="Gene3D" id="1.10.275.10">
    <property type="entry name" value="Fumarase/aspartase (N-terminal domain)"/>
    <property type="match status" value="1"/>
</dbReference>
<dbReference type="HAMAP" id="MF_00006">
    <property type="entry name" value="Arg_succ_lyase"/>
    <property type="match status" value="1"/>
</dbReference>
<dbReference type="InterPro" id="IPR029419">
    <property type="entry name" value="Arg_succ_lyase_C"/>
</dbReference>
<dbReference type="InterPro" id="IPR009049">
    <property type="entry name" value="Argininosuccinate_lyase"/>
</dbReference>
<dbReference type="InterPro" id="IPR024083">
    <property type="entry name" value="Fumarase/histidase_N"/>
</dbReference>
<dbReference type="InterPro" id="IPR020557">
    <property type="entry name" value="Fumarate_lyase_CS"/>
</dbReference>
<dbReference type="InterPro" id="IPR000362">
    <property type="entry name" value="Fumarate_lyase_fam"/>
</dbReference>
<dbReference type="InterPro" id="IPR022761">
    <property type="entry name" value="Fumarate_lyase_N"/>
</dbReference>
<dbReference type="InterPro" id="IPR008948">
    <property type="entry name" value="L-Aspartase-like"/>
</dbReference>
<dbReference type="NCBIfam" id="TIGR00838">
    <property type="entry name" value="argH"/>
    <property type="match status" value="1"/>
</dbReference>
<dbReference type="PANTHER" id="PTHR43814">
    <property type="entry name" value="ARGININOSUCCINATE LYASE"/>
    <property type="match status" value="1"/>
</dbReference>
<dbReference type="PANTHER" id="PTHR43814:SF1">
    <property type="entry name" value="ARGININOSUCCINATE LYASE"/>
    <property type="match status" value="1"/>
</dbReference>
<dbReference type="Pfam" id="PF14698">
    <property type="entry name" value="ASL_C2"/>
    <property type="match status" value="1"/>
</dbReference>
<dbReference type="Pfam" id="PF00206">
    <property type="entry name" value="Lyase_1"/>
    <property type="match status" value="1"/>
</dbReference>
<dbReference type="PRINTS" id="PR00145">
    <property type="entry name" value="ARGSUCLYASE"/>
</dbReference>
<dbReference type="PRINTS" id="PR00149">
    <property type="entry name" value="FUMRATELYASE"/>
</dbReference>
<dbReference type="SUPFAM" id="SSF48557">
    <property type="entry name" value="L-aspartase-like"/>
    <property type="match status" value="1"/>
</dbReference>
<dbReference type="PROSITE" id="PS00163">
    <property type="entry name" value="FUMARATE_LYASES"/>
    <property type="match status" value="1"/>
</dbReference>
<evidence type="ECO:0000255" key="1">
    <source>
        <dbReference type="HAMAP-Rule" id="MF_00006"/>
    </source>
</evidence>
<evidence type="ECO:0000305" key="2"/>
<comment type="catalytic activity">
    <reaction evidence="1">
        <text>2-(N(omega)-L-arginino)succinate = fumarate + L-arginine</text>
        <dbReference type="Rhea" id="RHEA:24020"/>
        <dbReference type="ChEBI" id="CHEBI:29806"/>
        <dbReference type="ChEBI" id="CHEBI:32682"/>
        <dbReference type="ChEBI" id="CHEBI:57472"/>
        <dbReference type="EC" id="4.3.2.1"/>
    </reaction>
</comment>
<comment type="pathway">
    <text evidence="1">Amino-acid biosynthesis; L-arginine biosynthesis; L-arginine from L-ornithine and carbamoyl phosphate: step 3/3.</text>
</comment>
<comment type="subcellular location">
    <subcellularLocation>
        <location evidence="1">Cytoplasm</location>
    </subcellularLocation>
</comment>
<comment type="similarity">
    <text evidence="1">Belongs to the lyase 1 family. Argininosuccinate lyase subfamily.</text>
</comment>
<comment type="sequence caution" evidence="2">
    <conflict type="frameshift">
        <sequence resource="EMBL-CDS" id="ABO10733"/>
    </conflict>
</comment>
<comment type="sequence caution" evidence="2">
    <conflict type="erroneous initiation">
        <sequence resource="EMBL-CDS" id="ABO10734"/>
    </conflict>
    <text>Truncated N-terminus.</text>
</comment>
<comment type="sequence caution" evidence="2">
    <conflict type="frameshift">
        <sequence resource="EMBL-CDS" id="ABO10734"/>
    </conflict>
</comment>
<reference key="1">
    <citation type="journal article" date="2007" name="Genes Dev.">
        <title>New insights into Acinetobacter baumannii pathogenesis revealed by high-density pyrosequencing and transposon mutagenesis.</title>
        <authorList>
            <person name="Smith M.G."/>
            <person name="Gianoulis T.A."/>
            <person name="Pukatzki S."/>
            <person name="Mekalanos J.J."/>
            <person name="Ornston L.N."/>
            <person name="Gerstein M."/>
            <person name="Snyder M."/>
        </authorList>
    </citation>
    <scope>NUCLEOTIDE SEQUENCE [LARGE SCALE GENOMIC DNA]</scope>
    <source>
        <strain>ATCC 17978 / DSM 105126 / CIP 53.77 / LMG 1025 / NCDC KC755 / 5377</strain>
    </source>
</reference>
<feature type="chain" id="PRO_0000434563" description="Argininosuccinate lyase">
    <location>
        <begin position="1"/>
        <end position="477"/>
    </location>
</feature>
<accession>A3M1E0</accession>
<accession>A3M1D9</accession>
<proteinExistence type="inferred from homology"/>
<gene>
    <name evidence="1" type="primary">argH</name>
    <name type="ordered locus">A1S_0258</name>
    <name type="ordered locus">A1S_0259</name>
</gene>
<keyword id="KW-0028">Amino-acid biosynthesis</keyword>
<keyword id="KW-0055">Arginine biosynthesis</keyword>
<keyword id="KW-0963">Cytoplasm</keyword>
<keyword id="KW-0456">Lyase</keyword>